<gene>
    <name type="primary">holB</name>
    <name type="ordered locus">YPO1606</name>
    <name type="ordered locus">y1765</name>
    <name type="ordered locus">YP_2248</name>
</gene>
<name>HOLB_YERPE</name>
<dbReference type="EC" id="2.7.7.7"/>
<dbReference type="EMBL" id="AL590842">
    <property type="protein sequence ID" value="CAL20251.1"/>
    <property type="molecule type" value="Genomic_DNA"/>
</dbReference>
<dbReference type="EMBL" id="AE009952">
    <property type="protein sequence ID" value="AAM85333.1"/>
    <property type="status" value="ALT_INIT"/>
    <property type="molecule type" value="Genomic_DNA"/>
</dbReference>
<dbReference type="EMBL" id="AE017042">
    <property type="protein sequence ID" value="AAS62454.1"/>
    <property type="status" value="ALT_INIT"/>
    <property type="molecule type" value="Genomic_DNA"/>
</dbReference>
<dbReference type="EMBL" id="AF065312">
    <property type="protein sequence ID" value="AAC18856.1"/>
    <property type="molecule type" value="Genomic_DNA"/>
</dbReference>
<dbReference type="PIR" id="AI0195">
    <property type="entry name" value="AI0195"/>
</dbReference>
<dbReference type="RefSeq" id="WP_002213083.1">
    <property type="nucleotide sequence ID" value="NZ_WUCM01000130.1"/>
</dbReference>
<dbReference type="RefSeq" id="YP_002346617.1">
    <property type="nucleotide sequence ID" value="NC_003143.1"/>
</dbReference>
<dbReference type="SMR" id="O69170"/>
<dbReference type="STRING" id="214092.YPO1606"/>
<dbReference type="PaxDb" id="214092-YPO1606"/>
<dbReference type="DNASU" id="1146712"/>
<dbReference type="EnsemblBacteria" id="AAS62454">
    <property type="protein sequence ID" value="AAS62454"/>
    <property type="gene ID" value="YP_2248"/>
</dbReference>
<dbReference type="GeneID" id="57976965"/>
<dbReference type="KEGG" id="ype:YPO1606"/>
<dbReference type="KEGG" id="ypk:y1765"/>
<dbReference type="KEGG" id="ypm:YP_2248"/>
<dbReference type="PATRIC" id="fig|214092.21.peg.1949"/>
<dbReference type="eggNOG" id="COG0470">
    <property type="taxonomic scope" value="Bacteria"/>
</dbReference>
<dbReference type="HOGENOM" id="CLU_006229_4_3_6"/>
<dbReference type="OMA" id="FAQGNHP"/>
<dbReference type="OrthoDB" id="9811073at2"/>
<dbReference type="Proteomes" id="UP000000815">
    <property type="component" value="Chromosome"/>
</dbReference>
<dbReference type="Proteomes" id="UP000001019">
    <property type="component" value="Chromosome"/>
</dbReference>
<dbReference type="Proteomes" id="UP000002490">
    <property type="component" value="Chromosome"/>
</dbReference>
<dbReference type="GO" id="GO:0009360">
    <property type="term" value="C:DNA polymerase III complex"/>
    <property type="evidence" value="ECO:0000318"/>
    <property type="project" value="GO_Central"/>
</dbReference>
<dbReference type="GO" id="GO:0008408">
    <property type="term" value="F:3'-5' exonuclease activity"/>
    <property type="evidence" value="ECO:0007669"/>
    <property type="project" value="InterPro"/>
</dbReference>
<dbReference type="GO" id="GO:0003677">
    <property type="term" value="F:DNA binding"/>
    <property type="evidence" value="ECO:0007669"/>
    <property type="project" value="InterPro"/>
</dbReference>
<dbReference type="GO" id="GO:0003887">
    <property type="term" value="F:DNA-directed DNA polymerase activity"/>
    <property type="evidence" value="ECO:0007669"/>
    <property type="project" value="UniProtKB-KW"/>
</dbReference>
<dbReference type="GO" id="GO:0006261">
    <property type="term" value="P:DNA-templated DNA replication"/>
    <property type="evidence" value="ECO:0000318"/>
    <property type="project" value="GO_Central"/>
</dbReference>
<dbReference type="FunFam" id="3.40.50.300:FF:000890">
    <property type="entry name" value="DNA polymerase III subunit delta"/>
    <property type="match status" value="1"/>
</dbReference>
<dbReference type="Gene3D" id="1.20.272.10">
    <property type="match status" value="1"/>
</dbReference>
<dbReference type="Gene3D" id="3.40.50.300">
    <property type="entry name" value="P-loop containing nucleotide triphosphate hydrolases"/>
    <property type="match status" value="1"/>
</dbReference>
<dbReference type="InterPro" id="IPR008921">
    <property type="entry name" value="DNA_pol3_clamp-load_cplx_C"/>
</dbReference>
<dbReference type="InterPro" id="IPR004622">
    <property type="entry name" value="DNA_pol_HolB"/>
</dbReference>
<dbReference type="InterPro" id="IPR015199">
    <property type="entry name" value="DNA_pol_III_delta_C"/>
</dbReference>
<dbReference type="InterPro" id="IPR050238">
    <property type="entry name" value="DNA_Rep/Repair_Clamp_Loader"/>
</dbReference>
<dbReference type="InterPro" id="IPR048731">
    <property type="entry name" value="HolB_lid-gammaproteobact"/>
</dbReference>
<dbReference type="InterPro" id="IPR027417">
    <property type="entry name" value="P-loop_NTPase"/>
</dbReference>
<dbReference type="NCBIfam" id="TIGR00678">
    <property type="entry name" value="holB"/>
    <property type="match status" value="1"/>
</dbReference>
<dbReference type="NCBIfam" id="NF005941">
    <property type="entry name" value="PRK07993.1"/>
    <property type="match status" value="1"/>
</dbReference>
<dbReference type="PANTHER" id="PTHR11669:SF8">
    <property type="entry name" value="DNA POLYMERASE III SUBUNIT DELTA"/>
    <property type="match status" value="1"/>
</dbReference>
<dbReference type="PANTHER" id="PTHR11669">
    <property type="entry name" value="REPLICATION FACTOR C / DNA POLYMERASE III GAMMA-TAU SUBUNIT"/>
    <property type="match status" value="1"/>
</dbReference>
<dbReference type="Pfam" id="PF13177">
    <property type="entry name" value="DNA_pol3_delta2"/>
    <property type="match status" value="1"/>
</dbReference>
<dbReference type="Pfam" id="PF09115">
    <property type="entry name" value="DNApol3-delta_C"/>
    <property type="match status" value="1"/>
</dbReference>
<dbReference type="Pfam" id="PF21500">
    <property type="entry name" value="HolB_lid"/>
    <property type="match status" value="1"/>
</dbReference>
<dbReference type="SUPFAM" id="SSF52540">
    <property type="entry name" value="P-loop containing nucleoside triphosphate hydrolases"/>
    <property type="match status" value="1"/>
</dbReference>
<dbReference type="SUPFAM" id="SSF48019">
    <property type="entry name" value="post-AAA+ oligomerization domain-like"/>
    <property type="match status" value="1"/>
</dbReference>
<reference key="1">
    <citation type="journal article" date="2001" name="Nature">
        <title>Genome sequence of Yersinia pestis, the causative agent of plague.</title>
        <authorList>
            <person name="Parkhill J."/>
            <person name="Wren B.W."/>
            <person name="Thomson N.R."/>
            <person name="Titball R.W."/>
            <person name="Holden M.T.G."/>
            <person name="Prentice M.B."/>
            <person name="Sebaihia M."/>
            <person name="James K.D."/>
            <person name="Churcher C.M."/>
            <person name="Mungall K.L."/>
            <person name="Baker S."/>
            <person name="Basham D."/>
            <person name="Bentley S.D."/>
            <person name="Brooks K."/>
            <person name="Cerdeno-Tarraga A.-M."/>
            <person name="Chillingworth T."/>
            <person name="Cronin A."/>
            <person name="Davies R.M."/>
            <person name="Davis P."/>
            <person name="Dougan G."/>
            <person name="Feltwell T."/>
            <person name="Hamlin N."/>
            <person name="Holroyd S."/>
            <person name="Jagels K."/>
            <person name="Karlyshev A.V."/>
            <person name="Leather S."/>
            <person name="Moule S."/>
            <person name="Oyston P.C.F."/>
            <person name="Quail M.A."/>
            <person name="Rutherford K.M."/>
            <person name="Simmonds M."/>
            <person name="Skelton J."/>
            <person name="Stevens K."/>
            <person name="Whitehead S."/>
            <person name="Barrell B.G."/>
        </authorList>
    </citation>
    <scope>NUCLEOTIDE SEQUENCE [LARGE SCALE GENOMIC DNA]</scope>
    <source>
        <strain>CO-92 / Biovar Orientalis</strain>
    </source>
</reference>
<reference key="2">
    <citation type="journal article" date="2002" name="J. Bacteriol.">
        <title>Genome sequence of Yersinia pestis KIM.</title>
        <authorList>
            <person name="Deng W."/>
            <person name="Burland V."/>
            <person name="Plunkett G. III"/>
            <person name="Boutin A."/>
            <person name="Mayhew G.F."/>
            <person name="Liss P."/>
            <person name="Perna N.T."/>
            <person name="Rose D.J."/>
            <person name="Mau B."/>
            <person name="Zhou S."/>
            <person name="Schwartz D.C."/>
            <person name="Fetherston J.D."/>
            <person name="Lindler L.E."/>
            <person name="Brubaker R.R."/>
            <person name="Plano G.V."/>
            <person name="Straley S.C."/>
            <person name="McDonough K.A."/>
            <person name="Nilles M.L."/>
            <person name="Matson J.S."/>
            <person name="Blattner F.R."/>
            <person name="Perry R.D."/>
        </authorList>
    </citation>
    <scope>NUCLEOTIDE SEQUENCE [LARGE SCALE GENOMIC DNA]</scope>
    <source>
        <strain>KIM10+ / Biovar Mediaevalis</strain>
    </source>
</reference>
<reference key="3">
    <citation type="journal article" date="2004" name="DNA Res.">
        <title>Complete genome sequence of Yersinia pestis strain 91001, an isolate avirulent to humans.</title>
        <authorList>
            <person name="Song Y."/>
            <person name="Tong Z."/>
            <person name="Wang J."/>
            <person name="Wang L."/>
            <person name="Guo Z."/>
            <person name="Han Y."/>
            <person name="Zhang J."/>
            <person name="Pei D."/>
            <person name="Zhou D."/>
            <person name="Qin H."/>
            <person name="Pang X."/>
            <person name="Han Y."/>
            <person name="Zhai J."/>
            <person name="Li M."/>
            <person name="Cui B."/>
            <person name="Qi Z."/>
            <person name="Jin L."/>
            <person name="Dai R."/>
            <person name="Chen F."/>
            <person name="Li S."/>
            <person name="Ye C."/>
            <person name="Du Z."/>
            <person name="Lin W."/>
            <person name="Wang J."/>
            <person name="Yu J."/>
            <person name="Yang H."/>
            <person name="Wang J."/>
            <person name="Huang P."/>
            <person name="Yang R."/>
        </authorList>
    </citation>
    <scope>NUCLEOTIDE SEQUENCE [LARGE SCALE GENOMIC DNA]</scope>
    <source>
        <strain>91001 / Biovar Mediaevalis</strain>
    </source>
</reference>
<reference key="4">
    <citation type="journal article" date="1999" name="Eur. J. Biochem.">
        <title>The highly similar TMP kinases of Yersinia pestis and Escherichia coli differ markedly in their AZTMP phosphorylating activity.</title>
        <authorList>
            <person name="Chenal-Francisque V."/>
            <person name="Tourneux L."/>
            <person name="Carniel E."/>
            <person name="Christova P."/>
            <person name="Li de la Sierra I."/>
            <person name="Barzu O."/>
            <person name="Gilles A.-M."/>
        </authorList>
    </citation>
    <scope>NUCLEOTIDE SEQUENCE [GENOMIC DNA] OF 1-189</scope>
    <source>
        <strain>6/69C</strain>
    </source>
</reference>
<keyword id="KW-0235">DNA replication</keyword>
<keyword id="KW-0239">DNA-directed DNA polymerase</keyword>
<keyword id="KW-0548">Nucleotidyltransferase</keyword>
<keyword id="KW-1185">Reference proteome</keyword>
<keyword id="KW-0808">Transferase</keyword>
<accession>O69170</accession>
<accession>Q0WGH1</accession>
<comment type="function">
    <text evidence="1">DNA polymerase III is a complex, multichain enzyme responsible for most of the replicative synthesis in bacteria. This DNA polymerase also exhibits 3' to 5' exonuclease activity (By similarity).</text>
</comment>
<comment type="catalytic activity">
    <reaction>
        <text>DNA(n) + a 2'-deoxyribonucleoside 5'-triphosphate = DNA(n+1) + diphosphate</text>
        <dbReference type="Rhea" id="RHEA:22508"/>
        <dbReference type="Rhea" id="RHEA-COMP:17339"/>
        <dbReference type="Rhea" id="RHEA-COMP:17340"/>
        <dbReference type="ChEBI" id="CHEBI:33019"/>
        <dbReference type="ChEBI" id="CHEBI:61560"/>
        <dbReference type="ChEBI" id="CHEBI:173112"/>
        <dbReference type="EC" id="2.7.7.7"/>
    </reaction>
</comment>
<comment type="subunit">
    <text evidence="1">The DNA polymerase holoenzyme is a complex that contains 10 different types of subunits. These subunits are organized into 3 functionally essential subassemblies: the pol III core, the beta sliding clamp processivity factor and the clamp-loading complex. The pol III core (subunits alpha,epsilon and theta) contains the polymerase and the 3'-5' exonuclease proofreading activities. The polymerase is tethered to the template via the sliding clamp processivity factor. The clamp-loading complex assembles the beta processivity factor onto the primer template and plays a central role in the organization and communication at the replication fork. This complex contains delta, delta', psi and chi, and copies of either or both of two different DnaX proteins, gamma and tau. The composition of the holoenzyme is, therefore: (alpha,epsilon,theta)[2]-(gamma/tau)[3]-delta,delta', psi,chi-beta[4] (By similarity).</text>
</comment>
<comment type="sequence caution" evidence="2">
    <conflict type="erroneous initiation">
        <sequence resource="EMBL-CDS" id="AAM85333"/>
    </conflict>
</comment>
<comment type="sequence caution" evidence="2">
    <conflict type="erroneous initiation">
        <sequence resource="EMBL-CDS" id="AAS62454"/>
    </conflict>
</comment>
<evidence type="ECO:0000250" key="1"/>
<evidence type="ECO:0000305" key="2"/>
<sequence>MNWYPWLNAPYRQLVGQHSTGRGHHALLLHSLPGNGEDALIYALSRWLMCQQRQGEKSCGECHSCRLMLAGNHPDWYVLTPEKGKSSIGVELVRQLIDKLYSHAQQGGAKVVWLPHAEVLTDAAANALLKTLEEPPEKTYFLLDCHQPASLLATLRSRCFYWYLACPDTAICLQWLNLQWRKRQIPVEPVAMLAALKLSEGAPLAAERLLQPERWSIRSALCSGLREALNRSDLLSLLPQLNHDDAAERLQWLSSLLLDALKWQQGAGEFAVNQDQLPLVQQLAHIAATPVLLQLAKQLAHCRHQLLSVVGVNRELLLTEQLLSWETALSTGTYSTLPSL</sequence>
<feature type="chain" id="PRO_0000105516" description="DNA polymerase III subunit delta'">
    <location>
        <begin position="1"/>
        <end position="340"/>
    </location>
</feature>
<feature type="sequence conflict" description="In Ref. 4; AAC18856." evidence="2" ref="4">
    <original>E</original>
    <variation>Q</variation>
    <location>
        <position position="137"/>
    </location>
</feature>
<protein>
    <recommendedName>
        <fullName>DNA polymerase III subunit delta'</fullName>
        <ecNumber>2.7.7.7</ecNumber>
    </recommendedName>
</protein>
<organism>
    <name type="scientific">Yersinia pestis</name>
    <dbReference type="NCBI Taxonomy" id="632"/>
    <lineage>
        <taxon>Bacteria</taxon>
        <taxon>Pseudomonadati</taxon>
        <taxon>Pseudomonadota</taxon>
        <taxon>Gammaproteobacteria</taxon>
        <taxon>Enterobacterales</taxon>
        <taxon>Yersiniaceae</taxon>
        <taxon>Yersinia</taxon>
    </lineage>
</organism>
<proteinExistence type="inferred from homology"/>